<accession>O46676</accession>
<proteinExistence type="inferred from homology"/>
<keyword id="KW-0202">Cytokine</keyword>
<keyword id="KW-1015">Disulfide bond</keyword>
<keyword id="KW-0339">Growth factor</keyword>
<keyword id="KW-0395">Inflammatory response</keyword>
<keyword id="KW-1185">Reference proteome</keyword>
<keyword id="KW-0964">Secreted</keyword>
<keyword id="KW-0732">Signal</keyword>
<name>GROA_BOVIN</name>
<sequence length="104" mass="10984">MAPAATAAAPRLLRAAMLFLLLVAAGRRAAGAPVVNELRCQCLQTLQGIHLKNIQSVKVTTPGPHCDQTEVIASLKTGQEVCLNPTAPMVKKIIDKMLNKASAN</sequence>
<evidence type="ECO:0000250" key="1"/>
<evidence type="ECO:0000255" key="2"/>
<evidence type="ECO:0000305" key="3"/>
<reference key="1">
    <citation type="journal article" date="1999" name="Mol. Biol. Evol.">
        <title>Isolation of novel GRO genes and a phylogenetic analysis of the CXC chemokine subfamily in mammals.</title>
        <authorList>
            <person name="Modi W.S."/>
            <person name="Yoshimura T."/>
        </authorList>
    </citation>
    <scope>NUCLEOTIDE SEQUENCE [MRNA]</scope>
</reference>
<protein>
    <recommendedName>
        <fullName>Growth-regulated protein homolog alpha</fullName>
        <shortName>GRO-alpha</shortName>
    </recommendedName>
</protein>
<comment type="subcellular location">
    <subcellularLocation>
        <location>Secreted</location>
    </subcellularLocation>
</comment>
<comment type="similarity">
    <text evidence="3">Belongs to the intercrine alpha (chemokine CxC) family.</text>
</comment>
<feature type="signal peptide" evidence="2">
    <location>
        <begin position="1"/>
        <end position="30"/>
    </location>
</feature>
<feature type="chain" id="PRO_0000005058" description="Growth-regulated protein homolog alpha">
    <location>
        <begin position="31"/>
        <end position="104"/>
    </location>
</feature>
<feature type="disulfide bond" evidence="1">
    <location>
        <begin position="40"/>
        <end position="66"/>
    </location>
</feature>
<feature type="disulfide bond" evidence="1">
    <location>
        <begin position="42"/>
        <end position="82"/>
    </location>
</feature>
<dbReference type="EMBL" id="U95812">
    <property type="protein sequence ID" value="AAB93928.1"/>
    <property type="molecule type" value="mRNA"/>
</dbReference>
<dbReference type="PIR" id="S50035">
    <property type="entry name" value="S50035"/>
</dbReference>
<dbReference type="RefSeq" id="NP_783631.1">
    <property type="nucleotide sequence ID" value="NM_175700.1"/>
</dbReference>
<dbReference type="SMR" id="O46676"/>
<dbReference type="FunCoup" id="O46676">
    <property type="interactions" value="442"/>
</dbReference>
<dbReference type="GeneID" id="281212"/>
<dbReference type="KEGG" id="bta:281212"/>
<dbReference type="CTD" id="281212"/>
<dbReference type="InParanoid" id="O46676"/>
<dbReference type="OrthoDB" id="8872899at2759"/>
<dbReference type="Proteomes" id="UP000009136">
    <property type="component" value="Unplaced"/>
</dbReference>
<dbReference type="GO" id="GO:0005615">
    <property type="term" value="C:extracellular space"/>
    <property type="evidence" value="ECO:0007669"/>
    <property type="project" value="UniProtKB-KW"/>
</dbReference>
<dbReference type="GO" id="GO:0008009">
    <property type="term" value="F:chemokine activity"/>
    <property type="evidence" value="ECO:0007669"/>
    <property type="project" value="InterPro"/>
</dbReference>
<dbReference type="GO" id="GO:0008083">
    <property type="term" value="F:growth factor activity"/>
    <property type="evidence" value="ECO:0007669"/>
    <property type="project" value="UniProtKB-KW"/>
</dbReference>
<dbReference type="GO" id="GO:0006955">
    <property type="term" value="P:immune response"/>
    <property type="evidence" value="ECO:0007669"/>
    <property type="project" value="InterPro"/>
</dbReference>
<dbReference type="GO" id="GO:0006954">
    <property type="term" value="P:inflammatory response"/>
    <property type="evidence" value="ECO:0007669"/>
    <property type="project" value="UniProtKB-KW"/>
</dbReference>
<dbReference type="CDD" id="cd00273">
    <property type="entry name" value="Chemokine_CXC"/>
    <property type="match status" value="1"/>
</dbReference>
<dbReference type="FunFam" id="2.40.50.40:FF:000004">
    <property type="entry name" value="C-X-C motif chemokine"/>
    <property type="match status" value="1"/>
</dbReference>
<dbReference type="Gene3D" id="2.40.50.40">
    <property type="match status" value="1"/>
</dbReference>
<dbReference type="InterPro" id="IPR039809">
    <property type="entry name" value="Chemokine_b/g/d"/>
</dbReference>
<dbReference type="InterPro" id="IPR001089">
    <property type="entry name" value="Chemokine_CXC"/>
</dbReference>
<dbReference type="InterPro" id="IPR018048">
    <property type="entry name" value="Chemokine_CXC_CS"/>
</dbReference>
<dbReference type="InterPro" id="IPR001811">
    <property type="entry name" value="Chemokine_IL8-like_dom"/>
</dbReference>
<dbReference type="InterPro" id="IPR033899">
    <property type="entry name" value="CXC_Chemokine_domain"/>
</dbReference>
<dbReference type="InterPro" id="IPR036048">
    <property type="entry name" value="Interleukin_8-like_sf"/>
</dbReference>
<dbReference type="PANTHER" id="PTHR12015:SF192">
    <property type="entry name" value="GROWTH-REGULATED ALPHA PROTEIN"/>
    <property type="match status" value="1"/>
</dbReference>
<dbReference type="PANTHER" id="PTHR12015">
    <property type="entry name" value="SMALL INDUCIBLE CYTOKINE A"/>
    <property type="match status" value="1"/>
</dbReference>
<dbReference type="Pfam" id="PF00048">
    <property type="entry name" value="IL8"/>
    <property type="match status" value="1"/>
</dbReference>
<dbReference type="PRINTS" id="PR00436">
    <property type="entry name" value="INTERLEUKIN8"/>
</dbReference>
<dbReference type="PRINTS" id="PR00437">
    <property type="entry name" value="SMALLCYTKCXC"/>
</dbReference>
<dbReference type="SMART" id="SM00199">
    <property type="entry name" value="SCY"/>
    <property type="match status" value="1"/>
</dbReference>
<dbReference type="SUPFAM" id="SSF54117">
    <property type="entry name" value="Interleukin 8-like chemokines"/>
    <property type="match status" value="1"/>
</dbReference>
<dbReference type="PROSITE" id="PS00471">
    <property type="entry name" value="SMALL_CYTOKINES_CXC"/>
    <property type="match status" value="1"/>
</dbReference>
<organism>
    <name type="scientific">Bos taurus</name>
    <name type="common">Bovine</name>
    <dbReference type="NCBI Taxonomy" id="9913"/>
    <lineage>
        <taxon>Eukaryota</taxon>
        <taxon>Metazoa</taxon>
        <taxon>Chordata</taxon>
        <taxon>Craniata</taxon>
        <taxon>Vertebrata</taxon>
        <taxon>Euteleostomi</taxon>
        <taxon>Mammalia</taxon>
        <taxon>Eutheria</taxon>
        <taxon>Laurasiatheria</taxon>
        <taxon>Artiodactyla</taxon>
        <taxon>Ruminantia</taxon>
        <taxon>Pecora</taxon>
        <taxon>Bovidae</taxon>
        <taxon>Bovinae</taxon>
        <taxon>Bos</taxon>
    </lineage>
</organism>